<feature type="chain" id="PRO_0000148260" description="Phosphoribosylformylglycinamidine cyclo-ligase">
    <location>
        <begin position="1"/>
        <end position="340"/>
    </location>
</feature>
<protein>
    <recommendedName>
        <fullName evidence="1">Phosphoribosylformylglycinamidine cyclo-ligase</fullName>
        <ecNumber evidence="1">6.3.3.1</ecNumber>
    </recommendedName>
    <alternativeName>
        <fullName evidence="1">AIR synthase</fullName>
    </alternativeName>
    <alternativeName>
        <fullName evidence="1">AIRS</fullName>
    </alternativeName>
    <alternativeName>
        <fullName evidence="1">Phosphoribosyl-aminoimidazole synthetase</fullName>
    </alternativeName>
</protein>
<proteinExistence type="inferred from homology"/>
<dbReference type="EC" id="6.3.3.1" evidence="1"/>
<dbReference type="EMBL" id="AE007317">
    <property type="protein sequence ID" value="AAK98852.1"/>
    <property type="molecule type" value="Genomic_DNA"/>
</dbReference>
<dbReference type="PIR" id="H97877">
    <property type="entry name" value="H97877"/>
</dbReference>
<dbReference type="RefSeq" id="NP_357642.1">
    <property type="nucleotide sequence ID" value="NC_003098.1"/>
</dbReference>
<dbReference type="RefSeq" id="WP_000182582.1">
    <property type="nucleotide sequence ID" value="NC_003098.1"/>
</dbReference>
<dbReference type="SMR" id="Q8DRM4"/>
<dbReference type="STRING" id="171101.spr0048"/>
<dbReference type="KEGG" id="spr:spr0048"/>
<dbReference type="PATRIC" id="fig|171101.6.peg.56"/>
<dbReference type="eggNOG" id="COG0150">
    <property type="taxonomic scope" value="Bacteria"/>
</dbReference>
<dbReference type="HOGENOM" id="CLU_047116_0_0_9"/>
<dbReference type="UniPathway" id="UPA00074">
    <property type="reaction ID" value="UER00129"/>
</dbReference>
<dbReference type="Proteomes" id="UP000000586">
    <property type="component" value="Chromosome"/>
</dbReference>
<dbReference type="GO" id="GO:0005829">
    <property type="term" value="C:cytosol"/>
    <property type="evidence" value="ECO:0000318"/>
    <property type="project" value="GO_Central"/>
</dbReference>
<dbReference type="GO" id="GO:0005524">
    <property type="term" value="F:ATP binding"/>
    <property type="evidence" value="ECO:0007669"/>
    <property type="project" value="UniProtKB-KW"/>
</dbReference>
<dbReference type="GO" id="GO:0004637">
    <property type="term" value="F:phosphoribosylamine-glycine ligase activity"/>
    <property type="evidence" value="ECO:0000318"/>
    <property type="project" value="GO_Central"/>
</dbReference>
<dbReference type="GO" id="GO:0004641">
    <property type="term" value="F:phosphoribosylformylglycinamidine cyclo-ligase activity"/>
    <property type="evidence" value="ECO:0000318"/>
    <property type="project" value="GO_Central"/>
</dbReference>
<dbReference type="GO" id="GO:0006189">
    <property type="term" value="P:'de novo' IMP biosynthetic process"/>
    <property type="evidence" value="ECO:0007669"/>
    <property type="project" value="UniProtKB-UniRule"/>
</dbReference>
<dbReference type="GO" id="GO:0046084">
    <property type="term" value="P:adenine biosynthetic process"/>
    <property type="evidence" value="ECO:0000318"/>
    <property type="project" value="GO_Central"/>
</dbReference>
<dbReference type="GO" id="GO:0006164">
    <property type="term" value="P:purine nucleotide biosynthetic process"/>
    <property type="evidence" value="ECO:0000318"/>
    <property type="project" value="GO_Central"/>
</dbReference>
<dbReference type="CDD" id="cd02196">
    <property type="entry name" value="PurM"/>
    <property type="match status" value="1"/>
</dbReference>
<dbReference type="FunFam" id="3.30.1330.10:FF:000001">
    <property type="entry name" value="Phosphoribosylformylglycinamidine cyclo-ligase"/>
    <property type="match status" value="1"/>
</dbReference>
<dbReference type="FunFam" id="3.90.650.10:FF:000011">
    <property type="entry name" value="Phosphoribosylformylglycinamidine cyclo-ligase"/>
    <property type="match status" value="1"/>
</dbReference>
<dbReference type="Gene3D" id="3.90.650.10">
    <property type="entry name" value="PurM-like C-terminal domain"/>
    <property type="match status" value="1"/>
</dbReference>
<dbReference type="Gene3D" id="3.30.1330.10">
    <property type="entry name" value="PurM-like, N-terminal domain"/>
    <property type="match status" value="1"/>
</dbReference>
<dbReference type="HAMAP" id="MF_00741">
    <property type="entry name" value="AIRS"/>
    <property type="match status" value="1"/>
</dbReference>
<dbReference type="InterPro" id="IPR010918">
    <property type="entry name" value="PurM-like_C_dom"/>
</dbReference>
<dbReference type="InterPro" id="IPR036676">
    <property type="entry name" value="PurM-like_C_sf"/>
</dbReference>
<dbReference type="InterPro" id="IPR016188">
    <property type="entry name" value="PurM-like_N"/>
</dbReference>
<dbReference type="InterPro" id="IPR036921">
    <property type="entry name" value="PurM-like_N_sf"/>
</dbReference>
<dbReference type="InterPro" id="IPR004733">
    <property type="entry name" value="PurM_cligase"/>
</dbReference>
<dbReference type="NCBIfam" id="TIGR00878">
    <property type="entry name" value="purM"/>
    <property type="match status" value="1"/>
</dbReference>
<dbReference type="PANTHER" id="PTHR10520:SF12">
    <property type="entry name" value="TRIFUNCTIONAL PURINE BIOSYNTHETIC PROTEIN ADENOSINE-3"/>
    <property type="match status" value="1"/>
</dbReference>
<dbReference type="PANTHER" id="PTHR10520">
    <property type="entry name" value="TRIFUNCTIONAL PURINE BIOSYNTHETIC PROTEIN ADENOSINE-3-RELATED"/>
    <property type="match status" value="1"/>
</dbReference>
<dbReference type="Pfam" id="PF00586">
    <property type="entry name" value="AIRS"/>
    <property type="match status" value="1"/>
</dbReference>
<dbReference type="Pfam" id="PF02769">
    <property type="entry name" value="AIRS_C"/>
    <property type="match status" value="1"/>
</dbReference>
<dbReference type="SUPFAM" id="SSF56042">
    <property type="entry name" value="PurM C-terminal domain-like"/>
    <property type="match status" value="1"/>
</dbReference>
<dbReference type="SUPFAM" id="SSF55326">
    <property type="entry name" value="PurM N-terminal domain-like"/>
    <property type="match status" value="1"/>
</dbReference>
<keyword id="KW-0067">ATP-binding</keyword>
<keyword id="KW-0963">Cytoplasm</keyword>
<keyword id="KW-0436">Ligase</keyword>
<keyword id="KW-0547">Nucleotide-binding</keyword>
<keyword id="KW-0658">Purine biosynthesis</keyword>
<keyword id="KW-1185">Reference proteome</keyword>
<reference key="1">
    <citation type="journal article" date="2001" name="J. Bacteriol.">
        <title>Genome of the bacterium Streptococcus pneumoniae strain R6.</title>
        <authorList>
            <person name="Hoskins J."/>
            <person name="Alborn W.E. Jr."/>
            <person name="Arnold J."/>
            <person name="Blaszczak L.C."/>
            <person name="Burgett S."/>
            <person name="DeHoff B.S."/>
            <person name="Estrem S.T."/>
            <person name="Fritz L."/>
            <person name="Fu D.-J."/>
            <person name="Fuller W."/>
            <person name="Geringer C."/>
            <person name="Gilmour R."/>
            <person name="Glass J.S."/>
            <person name="Khoja H."/>
            <person name="Kraft A.R."/>
            <person name="Lagace R.E."/>
            <person name="LeBlanc D.J."/>
            <person name="Lee L.N."/>
            <person name="Lefkowitz E.J."/>
            <person name="Lu J."/>
            <person name="Matsushima P."/>
            <person name="McAhren S.M."/>
            <person name="McHenney M."/>
            <person name="McLeaster K."/>
            <person name="Mundy C.W."/>
            <person name="Nicas T.I."/>
            <person name="Norris F.H."/>
            <person name="O'Gara M."/>
            <person name="Peery R.B."/>
            <person name="Robertson G.T."/>
            <person name="Rockey P."/>
            <person name="Sun P.-M."/>
            <person name="Winkler M.E."/>
            <person name="Yang Y."/>
            <person name="Young-Bellido M."/>
            <person name="Zhao G."/>
            <person name="Zook C.A."/>
            <person name="Baltz R.H."/>
            <person name="Jaskunas S.R."/>
            <person name="Rosteck P.R. Jr."/>
            <person name="Skatrud P.L."/>
            <person name="Glass J.I."/>
        </authorList>
    </citation>
    <scope>NUCLEOTIDE SEQUENCE [LARGE SCALE GENOMIC DNA]</scope>
    <source>
        <strain>ATCC BAA-255 / R6</strain>
    </source>
</reference>
<accession>Q8DRM4</accession>
<organism>
    <name type="scientific">Streptococcus pneumoniae (strain ATCC BAA-255 / R6)</name>
    <dbReference type="NCBI Taxonomy" id="171101"/>
    <lineage>
        <taxon>Bacteria</taxon>
        <taxon>Bacillati</taxon>
        <taxon>Bacillota</taxon>
        <taxon>Bacilli</taxon>
        <taxon>Lactobacillales</taxon>
        <taxon>Streptococcaceae</taxon>
        <taxon>Streptococcus</taxon>
    </lineage>
</organism>
<comment type="catalytic activity">
    <reaction evidence="1">
        <text>2-formamido-N(1)-(5-O-phospho-beta-D-ribosyl)acetamidine + ATP = 5-amino-1-(5-phospho-beta-D-ribosyl)imidazole + ADP + phosphate + H(+)</text>
        <dbReference type="Rhea" id="RHEA:23032"/>
        <dbReference type="ChEBI" id="CHEBI:15378"/>
        <dbReference type="ChEBI" id="CHEBI:30616"/>
        <dbReference type="ChEBI" id="CHEBI:43474"/>
        <dbReference type="ChEBI" id="CHEBI:137981"/>
        <dbReference type="ChEBI" id="CHEBI:147287"/>
        <dbReference type="ChEBI" id="CHEBI:456216"/>
        <dbReference type="EC" id="6.3.3.1"/>
    </reaction>
</comment>
<comment type="pathway">
    <text evidence="1">Purine metabolism; IMP biosynthesis via de novo pathway; 5-amino-1-(5-phospho-D-ribosyl)imidazole from N(2)-formyl-N(1)-(5-phospho-D-ribosyl)glycinamide: step 2/2.</text>
</comment>
<comment type="subcellular location">
    <subcellularLocation>
        <location evidence="1">Cytoplasm</location>
    </subcellularLocation>
</comment>
<comment type="similarity">
    <text evidence="1">Belongs to the AIR synthase family.</text>
</comment>
<name>PUR5_STRR6</name>
<sequence length="340" mass="36530">MTNKNAYAQSGVDVEAGYEVVERIKKHVARTERAGVMGALGGFGGMFDLSKTGVKEPVLISGTDGVGTKLMLAIKYDKHDTIGQDCVAMCVNDIIAAGAEPLYFLDYVATGKNEPAKLEQVVAGVAEGCVQAGAALIGGETAEMPGMYGEDDYDLAGFAVGVAEKSQIIDGSKVVEGDVLLGLVSSGIHSNGYSLVRRVFADYTGEEVLPELEGKKLKEVLLEPTRIYVKAVLPLIKEELVNGIAHITGGGFIENVPRMFADDLAAEIDESKVPVLPIFKALEKYGQIKHEEMFEIFNMGVGLMLAVSPENVERVKELLDEAVYEIGRIVKKENESVIIK</sequence>
<gene>
    <name evidence="1" type="primary">purM</name>
    <name type="ordered locus">spr0048</name>
</gene>
<evidence type="ECO:0000255" key="1">
    <source>
        <dbReference type="HAMAP-Rule" id="MF_00741"/>
    </source>
</evidence>